<proteinExistence type="inferred from homology"/>
<gene>
    <name evidence="1" type="primary">plsY</name>
    <name type="ordered locus">NGO_0858</name>
</gene>
<comment type="function">
    <text evidence="1">Catalyzes the transfer of an acyl group from acyl-phosphate (acyl-PO(4)) to glycerol-3-phosphate (G3P) to form lysophosphatidic acid (LPA). This enzyme utilizes acyl-phosphate as fatty acyl donor, but not acyl-CoA or acyl-ACP.</text>
</comment>
<comment type="catalytic activity">
    <reaction evidence="1">
        <text>an acyl phosphate + sn-glycerol 3-phosphate = a 1-acyl-sn-glycero-3-phosphate + phosphate</text>
        <dbReference type="Rhea" id="RHEA:34075"/>
        <dbReference type="ChEBI" id="CHEBI:43474"/>
        <dbReference type="ChEBI" id="CHEBI:57597"/>
        <dbReference type="ChEBI" id="CHEBI:57970"/>
        <dbReference type="ChEBI" id="CHEBI:59918"/>
        <dbReference type="EC" id="2.3.1.275"/>
    </reaction>
</comment>
<comment type="pathway">
    <text evidence="1">Lipid metabolism; phospholipid metabolism.</text>
</comment>
<comment type="subunit">
    <text evidence="1">Probably interacts with PlsX.</text>
</comment>
<comment type="subcellular location">
    <subcellularLocation>
        <location evidence="1">Cell inner membrane</location>
        <topology evidence="1">Multi-pass membrane protein</topology>
    </subcellularLocation>
</comment>
<comment type="similarity">
    <text evidence="1">Belongs to the PlsY family.</text>
</comment>
<protein>
    <recommendedName>
        <fullName evidence="1">Glycerol-3-phosphate acyltransferase</fullName>
    </recommendedName>
    <alternativeName>
        <fullName evidence="1">Acyl-PO4 G3P acyltransferase</fullName>
    </alternativeName>
    <alternativeName>
        <fullName evidence="1">Acyl-phosphate--glycerol-3-phosphate acyltransferase</fullName>
    </alternativeName>
    <alternativeName>
        <fullName evidence="1">G3P acyltransferase</fullName>
        <shortName evidence="1">GPAT</shortName>
        <ecNumber evidence="1">2.3.1.275</ecNumber>
    </alternativeName>
    <alternativeName>
        <fullName evidence="1">Lysophosphatidic acid synthase</fullName>
        <shortName evidence="1">LPA synthase</shortName>
    </alternativeName>
</protein>
<dbReference type="EC" id="2.3.1.275" evidence="1"/>
<dbReference type="EMBL" id="AE004969">
    <property type="protein sequence ID" value="AAW89560.1"/>
    <property type="molecule type" value="Genomic_DNA"/>
</dbReference>
<dbReference type="RefSeq" id="WP_003691121.1">
    <property type="nucleotide sequence ID" value="NC_002946.2"/>
</dbReference>
<dbReference type="RefSeq" id="YP_207972.1">
    <property type="nucleotide sequence ID" value="NC_002946.2"/>
</dbReference>
<dbReference type="SMR" id="Q5F8C7"/>
<dbReference type="STRING" id="242231.NGO_0858"/>
<dbReference type="GeneID" id="66753189"/>
<dbReference type="KEGG" id="ngo:NGO_0858"/>
<dbReference type="PATRIC" id="fig|242231.10.peg.1012"/>
<dbReference type="HOGENOM" id="CLU_081254_0_0_4"/>
<dbReference type="UniPathway" id="UPA00085"/>
<dbReference type="Proteomes" id="UP000000535">
    <property type="component" value="Chromosome"/>
</dbReference>
<dbReference type="GO" id="GO:0005886">
    <property type="term" value="C:plasma membrane"/>
    <property type="evidence" value="ECO:0007669"/>
    <property type="project" value="UniProtKB-SubCell"/>
</dbReference>
<dbReference type="GO" id="GO:0043772">
    <property type="term" value="F:acyl-phosphate glycerol-3-phosphate acyltransferase activity"/>
    <property type="evidence" value="ECO:0007669"/>
    <property type="project" value="UniProtKB-UniRule"/>
</dbReference>
<dbReference type="GO" id="GO:0008654">
    <property type="term" value="P:phospholipid biosynthetic process"/>
    <property type="evidence" value="ECO:0007669"/>
    <property type="project" value="UniProtKB-UniRule"/>
</dbReference>
<dbReference type="HAMAP" id="MF_01043">
    <property type="entry name" value="PlsY"/>
    <property type="match status" value="1"/>
</dbReference>
<dbReference type="InterPro" id="IPR003811">
    <property type="entry name" value="G3P_acylTferase_PlsY"/>
</dbReference>
<dbReference type="NCBIfam" id="TIGR00023">
    <property type="entry name" value="glycerol-3-phosphate 1-O-acyltransferase PlsY"/>
    <property type="match status" value="1"/>
</dbReference>
<dbReference type="PANTHER" id="PTHR30309:SF0">
    <property type="entry name" value="GLYCEROL-3-PHOSPHATE ACYLTRANSFERASE-RELATED"/>
    <property type="match status" value="1"/>
</dbReference>
<dbReference type="PANTHER" id="PTHR30309">
    <property type="entry name" value="INNER MEMBRANE PROTEIN YGIH"/>
    <property type="match status" value="1"/>
</dbReference>
<dbReference type="Pfam" id="PF02660">
    <property type="entry name" value="G3P_acyltransf"/>
    <property type="match status" value="1"/>
</dbReference>
<dbReference type="SMART" id="SM01207">
    <property type="entry name" value="G3P_acyltransf"/>
    <property type="match status" value="1"/>
</dbReference>
<reference key="1">
    <citation type="submission" date="2003-03" db="EMBL/GenBank/DDBJ databases">
        <title>The complete genome sequence of Neisseria gonorrhoeae.</title>
        <authorList>
            <person name="Lewis L.A."/>
            <person name="Gillaspy A.F."/>
            <person name="McLaughlin R.E."/>
            <person name="Gipson M."/>
            <person name="Ducey T.F."/>
            <person name="Ownbey T."/>
            <person name="Hartman K."/>
            <person name="Nydick C."/>
            <person name="Carson M.B."/>
            <person name="Vaughn J."/>
            <person name="Thomson C."/>
            <person name="Song L."/>
            <person name="Lin S."/>
            <person name="Yuan X."/>
            <person name="Najar F."/>
            <person name="Zhan M."/>
            <person name="Ren Q."/>
            <person name="Zhu H."/>
            <person name="Qi S."/>
            <person name="Kenton S.M."/>
            <person name="Lai H."/>
            <person name="White J.D."/>
            <person name="Clifton S."/>
            <person name="Roe B.A."/>
            <person name="Dyer D.W."/>
        </authorList>
    </citation>
    <scope>NUCLEOTIDE SEQUENCE [LARGE SCALE GENOMIC DNA]</scope>
    <source>
        <strain>ATCC 700825 / FA 1090</strain>
    </source>
</reference>
<accession>Q5F8C7</accession>
<sequence length="200" mass="20752">MFNIPAVAVSYLIGSLSFAVIVSKYYGMDDPRTYGSGNPGATNVLRSGKKKAAALTLLGDAAKGLVAVLLARVLQEPLGLSDSAIAAVALAALVGHMWPVFFGFKGGKGVATALGVLLALSPATALVCALIWLVMAFGFKVSSLAALVATTAAPLAALFFMPHTSWIFATLAIAILVLLRHKSNILNLIKGKESKIGEKR</sequence>
<evidence type="ECO:0000255" key="1">
    <source>
        <dbReference type="HAMAP-Rule" id="MF_01043"/>
    </source>
</evidence>
<name>PLSY_NEIG1</name>
<keyword id="KW-0997">Cell inner membrane</keyword>
<keyword id="KW-1003">Cell membrane</keyword>
<keyword id="KW-0444">Lipid biosynthesis</keyword>
<keyword id="KW-0443">Lipid metabolism</keyword>
<keyword id="KW-0472">Membrane</keyword>
<keyword id="KW-0594">Phospholipid biosynthesis</keyword>
<keyword id="KW-1208">Phospholipid metabolism</keyword>
<keyword id="KW-1185">Reference proteome</keyword>
<keyword id="KW-0808">Transferase</keyword>
<keyword id="KW-0812">Transmembrane</keyword>
<keyword id="KW-1133">Transmembrane helix</keyword>
<feature type="chain" id="PRO_0000188409" description="Glycerol-3-phosphate acyltransferase">
    <location>
        <begin position="1"/>
        <end position="200"/>
    </location>
</feature>
<feature type="transmembrane region" description="Helical" evidence="1">
    <location>
        <begin position="2"/>
        <end position="22"/>
    </location>
</feature>
<feature type="transmembrane region" description="Helical" evidence="1">
    <location>
        <begin position="51"/>
        <end position="71"/>
    </location>
</feature>
<feature type="transmembrane region" description="Helical" evidence="1">
    <location>
        <begin position="84"/>
        <end position="104"/>
    </location>
</feature>
<feature type="transmembrane region" description="Helical" evidence="1">
    <location>
        <begin position="114"/>
        <end position="134"/>
    </location>
</feature>
<feature type="transmembrane region" description="Helical" evidence="1">
    <location>
        <begin position="158"/>
        <end position="178"/>
    </location>
</feature>
<organism>
    <name type="scientific">Neisseria gonorrhoeae (strain ATCC 700825 / FA 1090)</name>
    <dbReference type="NCBI Taxonomy" id="242231"/>
    <lineage>
        <taxon>Bacteria</taxon>
        <taxon>Pseudomonadati</taxon>
        <taxon>Pseudomonadota</taxon>
        <taxon>Betaproteobacteria</taxon>
        <taxon>Neisseriales</taxon>
        <taxon>Neisseriaceae</taxon>
        <taxon>Neisseria</taxon>
    </lineage>
</organism>